<feature type="chain" id="PRO_0000326578" description="Protein TIC 214">
    <location>
        <begin position="1"/>
        <end position="1911"/>
    </location>
</feature>
<feature type="transmembrane region" description="Helical" evidence="2">
    <location>
        <begin position="41"/>
        <end position="61"/>
    </location>
</feature>
<feature type="transmembrane region" description="Helical" evidence="2">
    <location>
        <begin position="81"/>
        <end position="103"/>
    </location>
</feature>
<feature type="transmembrane region" description="Helical" evidence="2">
    <location>
        <begin position="108"/>
        <end position="128"/>
    </location>
</feature>
<feature type="transmembrane region" description="Helical" evidence="2">
    <location>
        <begin position="147"/>
        <end position="167"/>
    </location>
</feature>
<feature type="transmembrane region" description="Helical" evidence="2">
    <location>
        <begin position="195"/>
        <end position="215"/>
    </location>
</feature>
<feature type="transmembrane region" description="Helical" evidence="2">
    <location>
        <begin position="238"/>
        <end position="258"/>
    </location>
</feature>
<feature type="region of interest" description="Disordered" evidence="3">
    <location>
        <begin position="265"/>
        <end position="299"/>
    </location>
</feature>
<feature type="region of interest" description="Disordered" evidence="3">
    <location>
        <begin position="798"/>
        <end position="817"/>
    </location>
</feature>
<feature type="region of interest" description="Disordered" evidence="3">
    <location>
        <begin position="1599"/>
        <end position="1647"/>
    </location>
</feature>
<feature type="compositionally biased region" description="Acidic residues" evidence="3">
    <location>
        <begin position="268"/>
        <end position="297"/>
    </location>
</feature>
<feature type="compositionally biased region" description="Basic and acidic residues" evidence="3">
    <location>
        <begin position="1603"/>
        <end position="1615"/>
    </location>
</feature>
<feature type="compositionally biased region" description="Basic and acidic residues" evidence="3">
    <location>
        <begin position="1623"/>
        <end position="1635"/>
    </location>
</feature>
<evidence type="ECO:0000250" key="1">
    <source>
        <dbReference type="UniProtKB" id="P56785"/>
    </source>
</evidence>
<evidence type="ECO:0000255" key="2"/>
<evidence type="ECO:0000256" key="3">
    <source>
        <dbReference type="SAM" id="MobiDB-lite"/>
    </source>
</evidence>
<evidence type="ECO:0000305" key="4"/>
<dbReference type="EMBL" id="DQ400350">
    <property type="protein sequence ID" value="ABD48541.1"/>
    <property type="molecule type" value="Genomic_DNA"/>
</dbReference>
<dbReference type="EMBL" id="DQ400350">
    <property type="protein sequence ID" value="ABD48554.1"/>
    <property type="molecule type" value="Genomic_DNA"/>
</dbReference>
<dbReference type="RefSeq" id="YP_001595554.1">
    <property type="nucleotide sequence ID" value="NC_010109.1"/>
</dbReference>
<dbReference type="RefSeq" id="YP_001595567.1">
    <property type="nucleotide sequence ID" value="NC_010109.1"/>
</dbReference>
<dbReference type="GeneID" id="5787501"/>
<dbReference type="GeneID" id="5787562"/>
<dbReference type="GO" id="GO:0009706">
    <property type="term" value="C:chloroplast inner membrane"/>
    <property type="evidence" value="ECO:0007669"/>
    <property type="project" value="UniProtKB-SubCell"/>
</dbReference>
<dbReference type="GO" id="GO:0015031">
    <property type="term" value="P:protein transport"/>
    <property type="evidence" value="ECO:0007669"/>
    <property type="project" value="UniProtKB-KW"/>
</dbReference>
<dbReference type="InterPro" id="IPR008896">
    <property type="entry name" value="TIC214"/>
</dbReference>
<dbReference type="PANTHER" id="PTHR33163:SF40">
    <property type="entry name" value="PROTEIN TIC 214"/>
    <property type="match status" value="1"/>
</dbReference>
<dbReference type="PANTHER" id="PTHR33163">
    <property type="entry name" value="PROTEIN TIC 214-RELATED"/>
    <property type="match status" value="1"/>
</dbReference>
<dbReference type="Pfam" id="PF05758">
    <property type="entry name" value="Ycf1"/>
    <property type="match status" value="1"/>
</dbReference>
<geneLocation type="chloroplast"/>
<name>TI214_LEMMI</name>
<protein>
    <recommendedName>
        <fullName evidence="1">Protein TIC 214</fullName>
    </recommendedName>
    <alternativeName>
        <fullName evidence="1">Translocon at the inner envelope membrane of chloroplasts 214</fullName>
        <shortName evidence="1">AtTIC214</shortName>
    </alternativeName>
</protein>
<organism>
    <name type="scientific">Lemna minor</name>
    <name type="common">Common duckweed</name>
    <dbReference type="NCBI Taxonomy" id="4472"/>
    <lineage>
        <taxon>Eukaryota</taxon>
        <taxon>Viridiplantae</taxon>
        <taxon>Streptophyta</taxon>
        <taxon>Embryophyta</taxon>
        <taxon>Tracheophyta</taxon>
        <taxon>Spermatophyta</taxon>
        <taxon>Magnoliopsida</taxon>
        <taxon>Liliopsida</taxon>
        <taxon>Araceae</taxon>
        <taxon>Lemnoideae</taxon>
        <taxon>Lemna</taxon>
    </lineage>
</organism>
<comment type="function">
    <text evidence="1">Involved in protein precursor import into chloroplasts. May be part of an intermediate translocation complex acting as a protein-conducting channel at the inner envelope.</text>
</comment>
<comment type="subunit">
    <text evidence="1">Part of the Tic complex.</text>
</comment>
<comment type="subcellular location">
    <subcellularLocation>
        <location evidence="1">Plastid</location>
        <location evidence="1">Chloroplast inner membrane</location>
        <topology evidence="2">Multi-pass membrane protein</topology>
    </subcellularLocation>
</comment>
<comment type="similarity">
    <text evidence="4">Belongs to the TIC214 family.</text>
</comment>
<sequence length="1911" mass="228110">MEVKKSSYNNREVATQKKGRRFVMILKFFLLGNPLSLCMKIINSVVIVGLYYGFMTTFSIGPSYLFLLRAWLMEEGTEKQISATTGFIMGQLIIFISIYYAPLHLALGKPHTMTVLVLPYLLFNFFWNNNKNFLDYRSTTRNSIRNFNIQCIFLNNFIFQLFNHFILPSSTLARLVNIYMFRCNNKMLFVTSTFIGWLIGHIFFIKCVGLVLFWIRQNHSIQSNKYLLSELRNSLARIFSILLFITCVYYLGRMPLPIITKKLKETSETEESEENEEESDIEITSEPKEQDEEEGSTEENLYFGYEEKEDLYKINETNKIPVNGKEKTKDEFHFKETYYKDSPVYEDSYLDRYQEQELWELESKEDKNLFWFEKPLVTFLFDCKRWNRPFRYIKNDRFENAVRNEMSQYFFYTCPSDGKQRISFTYPPSLSTFSEMIERKISLYTTEKLSHEDNYWVYTNEQKKHTLSNELINRIKTLEKKTGSLVLDVLEKRIRLCNDENEKECLPKMYDPFLNGPYRGKITKLDSRSIRDDLITSTDAEESIEIVWINKIHGLLPIPNDSPKKEFEYQKNLFDGEFLSTNSGHSSTSIGEVPLEYPPSLNLKKLSLLAEEKRMDSEKQAKCLQLIFDVVTTDYNDQTIRNQNNKLIFPGIEEIRKEVPRWSYKLTDDLEEQEEENEEESMEDHEIRSRKAKRVVIYTDKEETTNAISNTSDSDQAEEVALIRYSQQSDFRRDLIKGSMRAQRRKTVIWEMFQANVHSPLFLDQIDKTFFLSFDISEMMNLVFRGWVGRESEFKISDSEEEETKEREKNKEKKEENERITISETWDSIIFAQAIRGSMLVTQSILRKYIVLPSLIIAKNVGRMLLFQFPEWYEDLKDWNREMHVKCTYNGVQLSETEFPKDWLTDGIQIKILFPFRLKPWRKSKVRPHHRDTMKKKGKKNNFCFLTVWGREAELPFGSPRKQPSFFQPIWKELNNKIRKLEKTFSLSLVLRVSKKTRKWFLKISKEKTRWVNKIVLVIKRIMKELEKINPIFLFGFGKVKVYESNENRKDSIISNKTTDESTIRIRSTNWTKHSLIEKKVKDLADRTTTIRNQIEQITKDKKKIVVTPGISISPNKTNCADKNSELQKPIWQIFKRKSTRLIRKFYYFLKYFIERIYSDILLCTINSLRTNAQLFLESTKKMINKFFYHDETNQEGIDQTNQNTIHFISTMQKSLSNISNKNSNISCDLSSLSQAYVFYTLSQVQVNNKYYLRSVFQYHGTHLFLKDRIKDYCGTRGLFDYKPKHKKVDKSGINEWKNWLKSHYQYNLSQTQWSRLVPQKWRNRVNQRCTIQKKDSIILDSYKKNQLIHYVKQNDYGIDSWTGQKEKLKKNYKYDLLAHKYMNYEDGGDSYIYASPLQVNRDPKIPYNFNTQKTQKPESFYALVGIDISDYLGEESSLYGEKNLDRKYFDCRILRFCFRKNIDIDIWTNMHIGTKINKNTKAGTQNYQKWDNKDIYPLTIHQKTKPSTSNKRKKLFDWMGMNKERLYRPISNLESWFFPEFGLLYDAYKLKPWIIPIQFLLLNIHRNTNLSPNNNINGNQKKDLNLRSNKKEYLELENQNQQEKKQKLSQRDLGSDTQQDTQKQKKKEDGEKNYTESTIKKRRKKKQFKSKKEAELDFFLKKYFLFQLRWDDSLNQRMINNIKVYCLLLRLINLKEIAISSIQRGEMRLDVMLIQKDLSLTELIKRGIFIIEPVRLSIKWDEEFFIYQTLGISLVNKSKQQSETDRRYIQKYLDENPFDKSISRHSTMLVSEDKNYYDLFVPENILSTRRRRELRILICFNSWKGNVVDVDRNFIFFNENDIRNCGQFLKKDKHFNTDPNKNKLMKLKLFLWPNYRLEDLACMNRYWFDTNNGSRFSMSRIQMYPQFRIY</sequence>
<reference key="1">
    <citation type="journal article" date="2008" name="J. Mol. Evol.">
        <title>Complete sequence of the Duckweed (Lemna minor) chloroplast genome: structural organization and phylogenetic relationships to other angiosperms.</title>
        <authorList>
            <person name="Mardanov A.V."/>
            <person name="Ravin N.V."/>
            <person name="Kuznetsov B.B."/>
            <person name="Samigullin T.H."/>
            <person name="Antonov A.S."/>
            <person name="Kolganova T.V."/>
            <person name="Skyabin K.G."/>
        </authorList>
    </citation>
    <scope>NUCLEOTIDE SEQUENCE [LARGE SCALE GENOMIC DNA]</scope>
</reference>
<proteinExistence type="inferred from homology"/>
<keyword id="KW-0150">Chloroplast</keyword>
<keyword id="KW-0472">Membrane</keyword>
<keyword id="KW-0934">Plastid</keyword>
<keyword id="KW-1001">Plastid inner membrane</keyword>
<keyword id="KW-0653">Protein transport</keyword>
<keyword id="KW-0812">Transmembrane</keyword>
<keyword id="KW-1133">Transmembrane helix</keyword>
<keyword id="KW-0813">Transport</keyword>
<accession>A9L9E2</accession>
<gene>
    <name evidence="1" type="primary">TIC214</name>
    <name type="synonym">ycf1</name>
</gene>